<reference key="1">
    <citation type="journal article" date="2005" name="Nat. Biotechnol.">
        <title>Genome sequence of the chlorinated compound-respiring bacterium Dehalococcoides species strain CBDB1.</title>
        <authorList>
            <person name="Kube M."/>
            <person name="Beck A."/>
            <person name="Zinder S.H."/>
            <person name="Kuhl H."/>
            <person name="Reinhardt R."/>
            <person name="Adrian L."/>
        </authorList>
    </citation>
    <scope>NUCLEOTIDE SEQUENCE [LARGE SCALE GENOMIC DNA]</scope>
    <source>
        <strain>CBDB1</strain>
    </source>
</reference>
<feature type="chain" id="PRO_0000238240" description="ATP synthase subunit alpha">
    <location>
        <begin position="1"/>
        <end position="503"/>
    </location>
</feature>
<feature type="binding site" evidence="1">
    <location>
        <begin position="169"/>
        <end position="176"/>
    </location>
    <ligand>
        <name>ATP</name>
        <dbReference type="ChEBI" id="CHEBI:30616"/>
    </ligand>
</feature>
<feature type="site" description="Required for activity" evidence="1">
    <location>
        <position position="362"/>
    </location>
</feature>
<gene>
    <name evidence="1" type="primary">atpA</name>
    <name type="ordered locus">cbdbA536</name>
</gene>
<accession>Q3ZZT9</accession>
<protein>
    <recommendedName>
        <fullName evidence="1">ATP synthase subunit alpha</fullName>
        <ecNumber evidence="1">7.1.2.2</ecNumber>
    </recommendedName>
    <alternativeName>
        <fullName evidence="1">ATP synthase F1 sector subunit alpha</fullName>
    </alternativeName>
    <alternativeName>
        <fullName evidence="1">F-ATPase subunit alpha</fullName>
    </alternativeName>
</protein>
<dbReference type="EC" id="7.1.2.2" evidence="1"/>
<dbReference type="EMBL" id="AJ965256">
    <property type="protein sequence ID" value="CAI82724.1"/>
    <property type="molecule type" value="Genomic_DNA"/>
</dbReference>
<dbReference type="RefSeq" id="WP_011309076.1">
    <property type="nucleotide sequence ID" value="NC_007356.1"/>
</dbReference>
<dbReference type="SMR" id="Q3ZZT9"/>
<dbReference type="KEGG" id="deh:cbdbA536"/>
<dbReference type="HOGENOM" id="CLU_010091_2_1_0"/>
<dbReference type="Proteomes" id="UP000000433">
    <property type="component" value="Chromosome"/>
</dbReference>
<dbReference type="GO" id="GO:0005886">
    <property type="term" value="C:plasma membrane"/>
    <property type="evidence" value="ECO:0007669"/>
    <property type="project" value="UniProtKB-SubCell"/>
</dbReference>
<dbReference type="GO" id="GO:0045259">
    <property type="term" value="C:proton-transporting ATP synthase complex"/>
    <property type="evidence" value="ECO:0007669"/>
    <property type="project" value="UniProtKB-KW"/>
</dbReference>
<dbReference type="GO" id="GO:0043531">
    <property type="term" value="F:ADP binding"/>
    <property type="evidence" value="ECO:0007669"/>
    <property type="project" value="TreeGrafter"/>
</dbReference>
<dbReference type="GO" id="GO:0005524">
    <property type="term" value="F:ATP binding"/>
    <property type="evidence" value="ECO:0007669"/>
    <property type="project" value="UniProtKB-UniRule"/>
</dbReference>
<dbReference type="GO" id="GO:0046933">
    <property type="term" value="F:proton-transporting ATP synthase activity, rotational mechanism"/>
    <property type="evidence" value="ECO:0007669"/>
    <property type="project" value="UniProtKB-UniRule"/>
</dbReference>
<dbReference type="CDD" id="cd18113">
    <property type="entry name" value="ATP-synt_F1_alpha_C"/>
    <property type="match status" value="1"/>
</dbReference>
<dbReference type="CDD" id="cd18116">
    <property type="entry name" value="ATP-synt_F1_alpha_N"/>
    <property type="match status" value="1"/>
</dbReference>
<dbReference type="CDD" id="cd01132">
    <property type="entry name" value="F1-ATPase_alpha_CD"/>
    <property type="match status" value="1"/>
</dbReference>
<dbReference type="FunFam" id="1.20.150.20:FF:000001">
    <property type="entry name" value="ATP synthase subunit alpha"/>
    <property type="match status" value="1"/>
</dbReference>
<dbReference type="FunFam" id="2.40.30.20:FF:000001">
    <property type="entry name" value="ATP synthase subunit alpha"/>
    <property type="match status" value="1"/>
</dbReference>
<dbReference type="FunFam" id="3.40.50.300:FF:000002">
    <property type="entry name" value="ATP synthase subunit alpha"/>
    <property type="match status" value="1"/>
</dbReference>
<dbReference type="Gene3D" id="2.40.30.20">
    <property type="match status" value="1"/>
</dbReference>
<dbReference type="Gene3D" id="1.20.150.20">
    <property type="entry name" value="ATP synthase alpha/beta chain, C-terminal domain"/>
    <property type="match status" value="1"/>
</dbReference>
<dbReference type="Gene3D" id="3.40.50.300">
    <property type="entry name" value="P-loop containing nucleotide triphosphate hydrolases"/>
    <property type="match status" value="1"/>
</dbReference>
<dbReference type="HAMAP" id="MF_01346">
    <property type="entry name" value="ATP_synth_alpha_bact"/>
    <property type="match status" value="1"/>
</dbReference>
<dbReference type="InterPro" id="IPR023366">
    <property type="entry name" value="ATP_synth_asu-like_sf"/>
</dbReference>
<dbReference type="InterPro" id="IPR000793">
    <property type="entry name" value="ATP_synth_asu_C"/>
</dbReference>
<dbReference type="InterPro" id="IPR038376">
    <property type="entry name" value="ATP_synth_asu_C_sf"/>
</dbReference>
<dbReference type="InterPro" id="IPR033732">
    <property type="entry name" value="ATP_synth_F1_a_nt-bd_dom"/>
</dbReference>
<dbReference type="InterPro" id="IPR005294">
    <property type="entry name" value="ATP_synth_F1_asu"/>
</dbReference>
<dbReference type="InterPro" id="IPR020003">
    <property type="entry name" value="ATPase_a/bsu_AS"/>
</dbReference>
<dbReference type="InterPro" id="IPR004100">
    <property type="entry name" value="ATPase_F1/V1/A1_a/bsu_N"/>
</dbReference>
<dbReference type="InterPro" id="IPR036121">
    <property type="entry name" value="ATPase_F1/V1/A1_a/bsu_N_sf"/>
</dbReference>
<dbReference type="InterPro" id="IPR000194">
    <property type="entry name" value="ATPase_F1/V1/A1_a/bsu_nucl-bd"/>
</dbReference>
<dbReference type="InterPro" id="IPR027417">
    <property type="entry name" value="P-loop_NTPase"/>
</dbReference>
<dbReference type="NCBIfam" id="TIGR00962">
    <property type="entry name" value="atpA"/>
    <property type="match status" value="1"/>
</dbReference>
<dbReference type="NCBIfam" id="NF009884">
    <property type="entry name" value="PRK13343.1"/>
    <property type="match status" value="1"/>
</dbReference>
<dbReference type="PANTHER" id="PTHR48082">
    <property type="entry name" value="ATP SYNTHASE SUBUNIT ALPHA, MITOCHONDRIAL"/>
    <property type="match status" value="1"/>
</dbReference>
<dbReference type="PANTHER" id="PTHR48082:SF2">
    <property type="entry name" value="ATP SYNTHASE SUBUNIT ALPHA, MITOCHONDRIAL"/>
    <property type="match status" value="1"/>
</dbReference>
<dbReference type="Pfam" id="PF00006">
    <property type="entry name" value="ATP-synt_ab"/>
    <property type="match status" value="1"/>
</dbReference>
<dbReference type="Pfam" id="PF00306">
    <property type="entry name" value="ATP-synt_ab_C"/>
    <property type="match status" value="1"/>
</dbReference>
<dbReference type="Pfam" id="PF02874">
    <property type="entry name" value="ATP-synt_ab_N"/>
    <property type="match status" value="1"/>
</dbReference>
<dbReference type="PIRSF" id="PIRSF039088">
    <property type="entry name" value="F_ATPase_subunit_alpha"/>
    <property type="match status" value="1"/>
</dbReference>
<dbReference type="SUPFAM" id="SSF47917">
    <property type="entry name" value="C-terminal domain of alpha and beta subunits of F1 ATP synthase"/>
    <property type="match status" value="1"/>
</dbReference>
<dbReference type="SUPFAM" id="SSF50615">
    <property type="entry name" value="N-terminal domain of alpha and beta subunits of F1 ATP synthase"/>
    <property type="match status" value="1"/>
</dbReference>
<dbReference type="SUPFAM" id="SSF52540">
    <property type="entry name" value="P-loop containing nucleoside triphosphate hydrolases"/>
    <property type="match status" value="1"/>
</dbReference>
<dbReference type="PROSITE" id="PS00152">
    <property type="entry name" value="ATPASE_ALPHA_BETA"/>
    <property type="match status" value="1"/>
</dbReference>
<name>ATPA_DEHMC</name>
<sequence length="503" mass="54093">MSARGQDIVSIIKEQIKEFGAPVSMTSVGSVIEVGDGIARIHGLSNAKYNELLEFPGGVLGIALNLEEDSVAAVILGEDSNIKEGDEVKATGRISEITVGKGMIGRVVDPLGRPLDGKGPIKAESTRPLERIAPNVVDRKSVNTPVQTGIKAIDAMIPIGRGQRELIIGDRSTGKTAIALDTIINQKGGDLVCIYVAIGQKASKVARIVALLEQYGAMEHTIVVAANSSDAVALQYLAPYAGCAIGEEFMEQGKDALVVYDDLTKHAWAYRQLSLLLRRPPGREAYPGDLFYLHSRLLERAARLNDKLGGGSLTALPIIETQAGDVSAYVPTNVISITDGQIYLEPDMFNAGIRPAVNVGISVSRVGSSAQTKAMKKVAGKLKMDMGQYRELAAFAQFGTSELDKSTRMQLERGQRVTEVLKQGQYQPVPAAKQVAILYATLNGYLDNIEVGKVRDYESGLYRFLEANFASVLTAIAKENVISADTEKTLKTALDEYKKGLVV</sequence>
<organism>
    <name type="scientific">Dehalococcoides mccartyi (strain CBDB1)</name>
    <dbReference type="NCBI Taxonomy" id="255470"/>
    <lineage>
        <taxon>Bacteria</taxon>
        <taxon>Bacillati</taxon>
        <taxon>Chloroflexota</taxon>
        <taxon>Dehalococcoidia</taxon>
        <taxon>Dehalococcoidales</taxon>
        <taxon>Dehalococcoidaceae</taxon>
        <taxon>Dehalococcoides</taxon>
    </lineage>
</organism>
<proteinExistence type="inferred from homology"/>
<keyword id="KW-0066">ATP synthesis</keyword>
<keyword id="KW-0067">ATP-binding</keyword>
<keyword id="KW-1003">Cell membrane</keyword>
<keyword id="KW-0139">CF(1)</keyword>
<keyword id="KW-0375">Hydrogen ion transport</keyword>
<keyword id="KW-0406">Ion transport</keyword>
<keyword id="KW-0472">Membrane</keyword>
<keyword id="KW-0547">Nucleotide-binding</keyword>
<keyword id="KW-1278">Translocase</keyword>
<keyword id="KW-0813">Transport</keyword>
<evidence type="ECO:0000255" key="1">
    <source>
        <dbReference type="HAMAP-Rule" id="MF_01346"/>
    </source>
</evidence>
<comment type="function">
    <text evidence="1">Produces ATP from ADP in the presence of a proton gradient across the membrane. The alpha chain is a regulatory subunit.</text>
</comment>
<comment type="catalytic activity">
    <reaction evidence="1">
        <text>ATP + H2O + 4 H(+)(in) = ADP + phosphate + 5 H(+)(out)</text>
        <dbReference type="Rhea" id="RHEA:57720"/>
        <dbReference type="ChEBI" id="CHEBI:15377"/>
        <dbReference type="ChEBI" id="CHEBI:15378"/>
        <dbReference type="ChEBI" id="CHEBI:30616"/>
        <dbReference type="ChEBI" id="CHEBI:43474"/>
        <dbReference type="ChEBI" id="CHEBI:456216"/>
        <dbReference type="EC" id="7.1.2.2"/>
    </reaction>
</comment>
<comment type="subunit">
    <text evidence="1">F-type ATPases have 2 components, CF(1) - the catalytic core - and CF(0) - the membrane proton channel. CF(1) has five subunits: alpha(3), beta(3), gamma(1), delta(1), epsilon(1). CF(0) has three main subunits: a(1), b(2) and c(9-12). The alpha and beta chains form an alternating ring which encloses part of the gamma chain. CF(1) is attached to CF(0) by a central stalk formed by the gamma and epsilon chains, while a peripheral stalk is formed by the delta and b chains.</text>
</comment>
<comment type="subcellular location">
    <subcellularLocation>
        <location evidence="1">Cell membrane</location>
        <topology evidence="1">Peripheral membrane protein</topology>
    </subcellularLocation>
</comment>
<comment type="similarity">
    <text evidence="1">Belongs to the ATPase alpha/beta chains family.</text>
</comment>